<accession>Q3IJ52</accession>
<comment type="function">
    <text evidence="1">One of several proteins that assist in the late maturation steps of the functional core of the 30S ribosomal subunit. Associates with free 30S ribosomal subunits (but not with 30S subunits that are part of 70S ribosomes or polysomes). Required for efficient processing of 16S rRNA. May interact with the 5'-terminal helix region of 16S rRNA.</text>
</comment>
<comment type="subunit">
    <text evidence="1">Monomer. Binds 30S ribosomal subunits, but not 50S ribosomal subunits or 70S ribosomes.</text>
</comment>
<comment type="subcellular location">
    <subcellularLocation>
        <location evidence="1">Cytoplasm</location>
    </subcellularLocation>
</comment>
<comment type="similarity">
    <text evidence="1">Belongs to the RbfA family.</text>
</comment>
<gene>
    <name evidence="1" type="primary">rbfA</name>
    <name type="ordered locus">PSHAa0998</name>
</gene>
<name>RBFA_PSET1</name>
<dbReference type="EMBL" id="CR954246">
    <property type="protein sequence ID" value="CAI86076.1"/>
    <property type="molecule type" value="Genomic_DNA"/>
</dbReference>
<dbReference type="SMR" id="Q3IJ52"/>
<dbReference type="STRING" id="326442.PSHAa0998"/>
<dbReference type="KEGG" id="pha:PSHAa0998"/>
<dbReference type="PATRIC" id="fig|326442.8.peg.958"/>
<dbReference type="eggNOG" id="COG0858">
    <property type="taxonomic scope" value="Bacteria"/>
</dbReference>
<dbReference type="HOGENOM" id="CLU_089475_5_0_6"/>
<dbReference type="BioCyc" id="PHAL326442:PSHA_RS04875-MONOMER"/>
<dbReference type="Proteomes" id="UP000006843">
    <property type="component" value="Chromosome I"/>
</dbReference>
<dbReference type="GO" id="GO:0005829">
    <property type="term" value="C:cytosol"/>
    <property type="evidence" value="ECO:0007669"/>
    <property type="project" value="TreeGrafter"/>
</dbReference>
<dbReference type="GO" id="GO:0043024">
    <property type="term" value="F:ribosomal small subunit binding"/>
    <property type="evidence" value="ECO:0007669"/>
    <property type="project" value="TreeGrafter"/>
</dbReference>
<dbReference type="GO" id="GO:0030490">
    <property type="term" value="P:maturation of SSU-rRNA"/>
    <property type="evidence" value="ECO:0007669"/>
    <property type="project" value="UniProtKB-UniRule"/>
</dbReference>
<dbReference type="FunFam" id="3.30.300.20:FF:000007">
    <property type="entry name" value="Ribosome-binding factor A"/>
    <property type="match status" value="1"/>
</dbReference>
<dbReference type="Gene3D" id="3.30.300.20">
    <property type="match status" value="1"/>
</dbReference>
<dbReference type="HAMAP" id="MF_00003">
    <property type="entry name" value="RbfA"/>
    <property type="match status" value="1"/>
</dbReference>
<dbReference type="InterPro" id="IPR015946">
    <property type="entry name" value="KH_dom-like_a/b"/>
</dbReference>
<dbReference type="InterPro" id="IPR000238">
    <property type="entry name" value="RbfA"/>
</dbReference>
<dbReference type="InterPro" id="IPR023799">
    <property type="entry name" value="RbfA_dom_sf"/>
</dbReference>
<dbReference type="NCBIfam" id="TIGR00082">
    <property type="entry name" value="rbfA"/>
    <property type="match status" value="1"/>
</dbReference>
<dbReference type="PANTHER" id="PTHR33515">
    <property type="entry name" value="RIBOSOME-BINDING FACTOR A, CHLOROPLASTIC-RELATED"/>
    <property type="match status" value="1"/>
</dbReference>
<dbReference type="PANTHER" id="PTHR33515:SF1">
    <property type="entry name" value="RIBOSOME-BINDING FACTOR A, CHLOROPLASTIC-RELATED"/>
    <property type="match status" value="1"/>
</dbReference>
<dbReference type="Pfam" id="PF02033">
    <property type="entry name" value="RBFA"/>
    <property type="match status" value="1"/>
</dbReference>
<dbReference type="SUPFAM" id="SSF89919">
    <property type="entry name" value="Ribosome-binding factor A, RbfA"/>
    <property type="match status" value="1"/>
</dbReference>
<proteinExistence type="inferred from homology"/>
<protein>
    <recommendedName>
        <fullName evidence="1">Ribosome-binding factor A</fullName>
    </recommendedName>
</protein>
<reference key="1">
    <citation type="journal article" date="2005" name="Genome Res.">
        <title>Coping with cold: the genome of the versatile marine Antarctica bacterium Pseudoalteromonas haloplanktis TAC125.</title>
        <authorList>
            <person name="Medigue C."/>
            <person name="Krin E."/>
            <person name="Pascal G."/>
            <person name="Barbe V."/>
            <person name="Bernsel A."/>
            <person name="Bertin P.N."/>
            <person name="Cheung F."/>
            <person name="Cruveiller S."/>
            <person name="D'Amico S."/>
            <person name="Duilio A."/>
            <person name="Fang G."/>
            <person name="Feller G."/>
            <person name="Ho C."/>
            <person name="Mangenot S."/>
            <person name="Marino G."/>
            <person name="Nilsson J."/>
            <person name="Parrilli E."/>
            <person name="Rocha E.P.C."/>
            <person name="Rouy Z."/>
            <person name="Sekowska A."/>
            <person name="Tutino M.L."/>
            <person name="Vallenet D."/>
            <person name="von Heijne G."/>
            <person name="Danchin A."/>
        </authorList>
    </citation>
    <scope>NUCLEOTIDE SEQUENCE [LARGE SCALE GENOMIC DNA]</scope>
    <source>
        <strain>TAC 125</strain>
    </source>
</reference>
<sequence length="166" mass="18714">MREFSRTDRVAQQIQKEIAVILQREIKDPRLGMVTVSAVEVSRDLSYAKIFITVFNTQDDNAAKQSANVLNEATGYIRSLLGKRIRARIMPELKFLVDNSLMEGMRISNLVDSIIREDNAKHVADETDVEDSTDHEDDVTNSEDETKHVDIDTDSEEGTNTDGKAQ</sequence>
<organism>
    <name type="scientific">Pseudoalteromonas translucida (strain TAC 125)</name>
    <dbReference type="NCBI Taxonomy" id="326442"/>
    <lineage>
        <taxon>Bacteria</taxon>
        <taxon>Pseudomonadati</taxon>
        <taxon>Pseudomonadota</taxon>
        <taxon>Gammaproteobacteria</taxon>
        <taxon>Alteromonadales</taxon>
        <taxon>Pseudoalteromonadaceae</taxon>
        <taxon>Pseudoalteromonas</taxon>
    </lineage>
</organism>
<evidence type="ECO:0000255" key="1">
    <source>
        <dbReference type="HAMAP-Rule" id="MF_00003"/>
    </source>
</evidence>
<evidence type="ECO:0000256" key="2">
    <source>
        <dbReference type="SAM" id="MobiDB-lite"/>
    </source>
</evidence>
<feature type="chain" id="PRO_0000321239" description="Ribosome-binding factor A">
    <location>
        <begin position="1"/>
        <end position="166"/>
    </location>
</feature>
<feature type="region of interest" description="Disordered" evidence="2">
    <location>
        <begin position="122"/>
        <end position="166"/>
    </location>
</feature>
<feature type="compositionally biased region" description="Acidic residues" evidence="2">
    <location>
        <begin position="126"/>
        <end position="143"/>
    </location>
</feature>
<keyword id="KW-0963">Cytoplasm</keyword>
<keyword id="KW-1185">Reference proteome</keyword>
<keyword id="KW-0690">Ribosome biogenesis</keyword>